<sequence>MRLLILFLAVVTLLSLAGPGSAEVRRRRRRPPCEDVNGQCQPRGNPCLRLRGACPRGSRCCMPTVAAH</sequence>
<feature type="signal peptide" evidence="7 8">
    <location>
        <begin position="1"/>
        <end position="24"/>
    </location>
</feature>
<feature type="chain" id="PRO_0000352730" description="Venom-like beta-defensin" evidence="7 8">
    <location>
        <begin position="25"/>
        <end position="68"/>
    </location>
</feature>
<feature type="disulfide bond" evidence="3 9">
    <location>
        <begin position="33"/>
        <end position="60"/>
    </location>
</feature>
<feature type="disulfide bond" evidence="3 9">
    <location>
        <begin position="40"/>
        <end position="54"/>
    </location>
</feature>
<feature type="disulfide bond" evidence="3 9">
    <location>
        <begin position="47"/>
        <end position="61"/>
    </location>
</feature>
<feature type="mutagenesis site" description="Decrease in antimicrobial potency, but no change in overall fold." evidence="3">
    <location>
        <begin position="25"/>
        <end position="28"/>
    </location>
</feature>
<feature type="helix" evidence="10">
    <location>
        <begin position="32"/>
        <end position="35"/>
    </location>
</feature>
<feature type="strand" evidence="10">
    <location>
        <begin position="39"/>
        <end position="41"/>
    </location>
</feature>
<feature type="strand" evidence="10">
    <location>
        <begin position="43"/>
        <end position="52"/>
    </location>
</feature>
<feature type="strand" evidence="10">
    <location>
        <begin position="59"/>
        <end position="62"/>
    </location>
</feature>
<dbReference type="PDB" id="2MN3">
    <property type="method" value="NMR"/>
    <property type="chains" value="A=25-68"/>
</dbReference>
<dbReference type="PDBsum" id="2MN3"/>
<dbReference type="BMRB" id="P0C8B1"/>
<dbReference type="SMR" id="P0C8B1"/>
<dbReference type="Ensembl" id="ENSOANT00000060174.1">
    <property type="protein sequence ID" value="ENSOANP00000045696.1"/>
    <property type="gene ID" value="ENSOANG00000047887.1"/>
</dbReference>
<dbReference type="InParanoid" id="P0C8B1"/>
<dbReference type="Proteomes" id="UP000002279">
    <property type="component" value="Chromosome X2"/>
</dbReference>
<dbReference type="Bgee" id="ENSOANG00000047887">
    <property type="expression patterns" value="Expressed in liver and 2 other cell types or tissues"/>
</dbReference>
<dbReference type="GO" id="GO:0005576">
    <property type="term" value="C:extracellular region"/>
    <property type="evidence" value="ECO:0007669"/>
    <property type="project" value="UniProtKB-SubCell"/>
</dbReference>
<dbReference type="GO" id="GO:0042742">
    <property type="term" value="P:defense response to bacterium"/>
    <property type="evidence" value="ECO:0007669"/>
    <property type="project" value="UniProtKB-KW"/>
</dbReference>
<dbReference type="Gene3D" id="2.20.20.10">
    <property type="entry name" value="Anthopleurin-A"/>
    <property type="match status" value="1"/>
</dbReference>
<dbReference type="InterPro" id="IPR049528">
    <property type="entry name" value="DEFBL_dom"/>
</dbReference>
<dbReference type="InterPro" id="IPR023355">
    <property type="entry name" value="Myo_ane_neurotoxin_sf"/>
</dbReference>
<dbReference type="Pfam" id="PF17858">
    <property type="entry name" value="Defensin_int"/>
    <property type="match status" value="1"/>
</dbReference>
<organism>
    <name type="scientific">Ornithorhynchus anatinus</name>
    <name type="common">Duckbill platypus</name>
    <dbReference type="NCBI Taxonomy" id="9258"/>
    <lineage>
        <taxon>Eukaryota</taxon>
        <taxon>Metazoa</taxon>
        <taxon>Chordata</taxon>
        <taxon>Craniata</taxon>
        <taxon>Vertebrata</taxon>
        <taxon>Euteleostomi</taxon>
        <taxon>Mammalia</taxon>
        <taxon>Monotremata</taxon>
        <taxon>Ornithorhynchidae</taxon>
        <taxon>Ornithorhynchus</taxon>
    </lineage>
</organism>
<name>DEFBL_ORNAN</name>
<protein>
    <recommendedName>
        <fullName evidence="4">Venom-like beta-defensin</fullName>
        <shortName evidence="4">DefB-vL</shortName>
        <shortName evidence="4">Defensin-BvL</shortName>
        <shortName evidence="5">OaDefB-vL</shortName>
    </recommendedName>
    <alternativeName>
        <fullName evidence="6">Intermediate defensin-like peptide</fullName>
        <shortName evidence="6">Int-DLP</shortName>
    </alternativeName>
    <alternativeName>
        <fullName evidence="4">Ornithorhynchus venom defensin-like peptide</fullName>
        <shortName evidence="4 5">OvDLP</shortName>
    </alternativeName>
</protein>
<reference key="1">
    <citation type="journal article" date="2008" name="Genome Res.">
        <title>Defensins and the convergent evolution of platypus and reptile venom genes.</title>
        <authorList>
            <person name="Whittington C.M."/>
            <person name="Papenfuss A.T."/>
            <person name="Bansal P."/>
            <person name="Torres A.M."/>
            <person name="Wong E.S."/>
            <person name="Deakin J.E."/>
            <person name="Graves T."/>
            <person name="Alsop A."/>
            <person name="Schatzkamer K."/>
            <person name="Kremitzki C."/>
            <person name="Ponting C.P."/>
            <person name="Temple-Smith P."/>
            <person name="Warren W.C."/>
            <person name="Kuchel P.W."/>
            <person name="Belov K."/>
        </authorList>
    </citation>
    <scope>NUCLEOTIDE SEQUENCE [MRNA]</scope>
    <scope>SYNTHESIS OF 25-68</scope>
</reference>
<reference key="2">
    <citation type="journal article" date="2008" name="Toxicon">
        <title>Expression patterns of platypus defensin and related venom genes across a range of tissue types reveal the possibility of broader functions for OvDLPs than previously suspected.</title>
        <authorList>
            <person name="Whittington C.M."/>
            <person name="Papenfuss A.T."/>
            <person name="Kuchel P.W."/>
            <person name="Belov K."/>
        </authorList>
    </citation>
    <scope>TISSUE SPECIFICITY</scope>
    <source>
        <tissue>Brain</tissue>
        <tissue>Kidney</tissue>
        <tissue>Liver</tissue>
        <tissue>Lung</tissue>
        <tissue>Spleen</tissue>
        <tissue>Testis</tissue>
    </source>
</reference>
<reference key="3">
    <citation type="journal article" date="2014" name="FEBS Lett.">
        <title>Structure and antimicrobial activity of platypus 'intermediate' defensin-like peptide.</title>
        <authorList>
            <person name="Torres A.M."/>
            <person name="Bansal P."/>
            <person name="Koh J.M."/>
            <person name="Pages G."/>
            <person name="Wu M.J."/>
            <person name="Kuchel P.W."/>
        </authorList>
    </citation>
    <scope>STRUCTURE BY NMR OF 25-68</scope>
    <scope>DISULFIDE BOND</scope>
    <scope>SYNTHESIS OF 25-68</scope>
    <scope>FUNCTION</scope>
    <scope>MUTAGENESIS OF 25-ARG--ARG-28</scope>
</reference>
<keyword id="KW-0002">3D-structure</keyword>
<keyword id="KW-0044">Antibiotic</keyword>
<keyword id="KW-0929">Antimicrobial</keyword>
<keyword id="KW-0211">Defensin</keyword>
<keyword id="KW-1015">Disulfide bond</keyword>
<keyword id="KW-1185">Reference proteome</keyword>
<keyword id="KW-0964">Secreted</keyword>
<keyword id="KW-0732">Signal</keyword>
<evidence type="ECO:0000250" key="1"/>
<evidence type="ECO:0000269" key="2">
    <source>
    </source>
</evidence>
<evidence type="ECO:0000269" key="3">
    <source>
    </source>
</evidence>
<evidence type="ECO:0000303" key="4">
    <source>
    </source>
</evidence>
<evidence type="ECO:0000303" key="5">
    <source>
    </source>
</evidence>
<evidence type="ECO:0000303" key="6">
    <source>
    </source>
</evidence>
<evidence type="ECO:0000305" key="7">
    <source>
    </source>
</evidence>
<evidence type="ECO:0000305" key="8">
    <source>
    </source>
</evidence>
<evidence type="ECO:0000312" key="9">
    <source>
        <dbReference type="PDB" id="2MN3"/>
    </source>
</evidence>
<evidence type="ECO:0007829" key="10">
    <source>
        <dbReference type="PDB" id="2MN3"/>
    </source>
</evidence>
<accession>P0C8B1</accession>
<comment type="function">
    <text evidence="3">Potent antimicrobial peptide that displays activity against S.aureus and P.aeruginosa (PubMed:24694388). Does not inhibit growth of E.coli (PubMed:24694388).</text>
</comment>
<comment type="subcellular location">
    <subcellularLocation>
        <location evidence="1">Secreted</location>
    </subcellularLocation>
</comment>
<comment type="tissue specificity">
    <text evidence="2">Highly expressed in intestine, liver and spleen and expressed at lower levels in brain, kidney, lung, testis and venom gland.</text>
</comment>
<comment type="domain">
    <text evidence="3">The 4 N-terminal Arg residues do not affect the overall fold, but are important for the antimicrobial potency.</text>
</comment>
<comment type="online information" name="Platypus resources">
    <link uri="https://www.twinkl.ch/search?q=platypus"/>
</comment>
<proteinExistence type="evidence at protein level"/>